<organism>
    <name type="scientific">Mus musculus</name>
    <name type="common">Mouse</name>
    <dbReference type="NCBI Taxonomy" id="10090"/>
    <lineage>
        <taxon>Eukaryota</taxon>
        <taxon>Metazoa</taxon>
        <taxon>Chordata</taxon>
        <taxon>Craniata</taxon>
        <taxon>Vertebrata</taxon>
        <taxon>Euteleostomi</taxon>
        <taxon>Mammalia</taxon>
        <taxon>Eutheria</taxon>
        <taxon>Euarchontoglires</taxon>
        <taxon>Glires</taxon>
        <taxon>Rodentia</taxon>
        <taxon>Myomorpha</taxon>
        <taxon>Muroidea</taxon>
        <taxon>Muridae</taxon>
        <taxon>Murinae</taxon>
        <taxon>Mus</taxon>
        <taxon>Mus</taxon>
    </lineage>
</organism>
<evidence type="ECO:0000250" key="1"/>
<evidence type="ECO:0000250" key="2">
    <source>
        <dbReference type="UniProtKB" id="Q6VMQ6"/>
    </source>
</evidence>
<evidence type="ECO:0000255" key="3"/>
<evidence type="ECO:0000255" key="4">
    <source>
        <dbReference type="PROSITE-ProRule" id="PRU00316"/>
    </source>
</evidence>
<evidence type="ECO:0000256" key="5">
    <source>
        <dbReference type="SAM" id="MobiDB-lite"/>
    </source>
</evidence>
<evidence type="ECO:0000269" key="6">
    <source>
    </source>
</evidence>
<evidence type="ECO:0000269" key="7">
    <source>
    </source>
</evidence>
<evidence type="ECO:0000303" key="8">
    <source>
    </source>
</evidence>
<evidence type="ECO:0000305" key="9"/>
<evidence type="ECO:0007744" key="10">
    <source>
    </source>
</evidence>
<evidence type="ECO:0007744" key="11">
    <source>
    </source>
</evidence>
<feature type="chain" id="PRO_0000281781" description="Activating transcription factor 7-interacting protein 1">
    <location>
        <begin position="1"/>
        <end position="1306"/>
    </location>
</feature>
<feature type="domain" description="Fibronectin type-III 1" evidence="4">
    <location>
        <begin position="1054"/>
        <end position="1143"/>
    </location>
</feature>
<feature type="domain" description="Fibronectin type-III 2" evidence="4">
    <location>
        <begin position="1196"/>
        <end position="1302"/>
    </location>
</feature>
<feature type="region of interest" description="Disordered" evidence="5">
    <location>
        <begin position="1"/>
        <end position="23"/>
    </location>
</feature>
<feature type="region of interest" description="Disordered" evidence="5">
    <location>
        <begin position="104"/>
        <end position="470"/>
    </location>
</feature>
<feature type="region of interest" description="Disordered" evidence="5">
    <location>
        <begin position="496"/>
        <end position="604"/>
    </location>
</feature>
<feature type="region of interest" description="Interaction with SETDB1" evidence="1">
    <location>
        <begin position="596"/>
        <end position="851"/>
    </location>
</feature>
<feature type="region of interest" description="Disordered" evidence="5">
    <location>
        <begin position="689"/>
        <end position="722"/>
    </location>
</feature>
<feature type="region of interest" description="Disordered" evidence="5">
    <location>
        <begin position="765"/>
        <end position="785"/>
    </location>
</feature>
<feature type="region of interest" description="Disordered" evidence="5">
    <location>
        <begin position="871"/>
        <end position="895"/>
    </location>
</feature>
<feature type="region of interest" description="Disordered" evidence="5">
    <location>
        <begin position="920"/>
        <end position="1060"/>
    </location>
</feature>
<feature type="region of interest" description="Interaction with SUMO" evidence="1">
    <location>
        <begin position="1001"/>
        <end position="1011"/>
    </location>
</feature>
<feature type="region of interest" description="Disordered" evidence="5">
    <location>
        <begin position="1152"/>
        <end position="1196"/>
    </location>
</feature>
<feature type="region of interest" description="Interaction with MBD1" evidence="1">
    <location>
        <begin position="1190"/>
        <end position="1306"/>
    </location>
</feature>
<feature type="coiled-coil region" evidence="3">
    <location>
        <begin position="666"/>
        <end position="696"/>
    </location>
</feature>
<feature type="short sequence motif" description="Nuclear localization signal" evidence="6">
    <location>
        <begin position="587"/>
        <end position="605"/>
    </location>
</feature>
<feature type="compositionally biased region" description="Polar residues" evidence="5">
    <location>
        <begin position="109"/>
        <end position="134"/>
    </location>
</feature>
<feature type="compositionally biased region" description="Polar residues" evidence="5">
    <location>
        <begin position="143"/>
        <end position="162"/>
    </location>
</feature>
<feature type="compositionally biased region" description="Low complexity" evidence="5">
    <location>
        <begin position="185"/>
        <end position="212"/>
    </location>
</feature>
<feature type="compositionally biased region" description="Low complexity" evidence="5">
    <location>
        <begin position="246"/>
        <end position="261"/>
    </location>
</feature>
<feature type="compositionally biased region" description="Low complexity" evidence="5">
    <location>
        <begin position="284"/>
        <end position="303"/>
    </location>
</feature>
<feature type="compositionally biased region" description="Basic and acidic residues" evidence="5">
    <location>
        <begin position="432"/>
        <end position="441"/>
    </location>
</feature>
<feature type="compositionally biased region" description="Polar residues" evidence="5">
    <location>
        <begin position="513"/>
        <end position="523"/>
    </location>
</feature>
<feature type="compositionally biased region" description="Basic and acidic residues" evidence="5">
    <location>
        <begin position="557"/>
        <end position="566"/>
    </location>
</feature>
<feature type="compositionally biased region" description="Basic and acidic residues" evidence="5">
    <location>
        <begin position="592"/>
        <end position="601"/>
    </location>
</feature>
<feature type="compositionally biased region" description="Basic and acidic residues" evidence="5">
    <location>
        <begin position="689"/>
        <end position="699"/>
    </location>
</feature>
<feature type="compositionally biased region" description="Polar residues" evidence="5">
    <location>
        <begin position="713"/>
        <end position="722"/>
    </location>
</feature>
<feature type="compositionally biased region" description="Pro residues" evidence="5">
    <location>
        <begin position="871"/>
        <end position="884"/>
    </location>
</feature>
<feature type="compositionally biased region" description="Polar residues" evidence="5">
    <location>
        <begin position="948"/>
        <end position="981"/>
    </location>
</feature>
<feature type="compositionally biased region" description="Low complexity" evidence="5">
    <location>
        <begin position="987"/>
        <end position="1000"/>
    </location>
</feature>
<feature type="compositionally biased region" description="Low complexity" evidence="5">
    <location>
        <begin position="1022"/>
        <end position="1040"/>
    </location>
</feature>
<feature type="compositionally biased region" description="Pro residues" evidence="5">
    <location>
        <begin position="1170"/>
        <end position="1187"/>
    </location>
</feature>
<feature type="modified residue" description="N-acetylmethionine" evidence="2">
    <location>
        <position position="1"/>
    </location>
</feature>
<feature type="modified residue" description="Phosphoserine" evidence="10">
    <location>
        <position position="57"/>
    </location>
</feature>
<feature type="modified residue" description="Phosphoserine" evidence="11">
    <location>
        <position position="112"/>
    </location>
</feature>
<feature type="modified residue" description="Phosphothreonine" evidence="2">
    <location>
        <position position="124"/>
    </location>
</feature>
<feature type="modified residue" description="Phosphoserine" evidence="2">
    <location>
        <position position="511"/>
    </location>
</feature>
<feature type="modified residue" description="Phosphoserine" evidence="11">
    <location>
        <position position="514"/>
    </location>
</feature>
<feature type="modified residue" description="Phosphoserine" evidence="11">
    <location>
        <position position="516"/>
    </location>
</feature>
<feature type="modified residue" description="Phosphoserine" evidence="2">
    <location>
        <position position="533"/>
    </location>
</feature>
<feature type="modified residue" description="Phosphoserine" evidence="11">
    <location>
        <position position="593"/>
    </location>
</feature>
<feature type="modified residue" description="Phosphoserine" evidence="11">
    <location>
        <position position="700"/>
    </location>
</feature>
<feature type="modified residue" description="Phosphoserine" evidence="2">
    <location>
        <position position="707"/>
    </location>
</feature>
<feature type="modified residue" description="Phosphoserine" evidence="2">
    <location>
        <position position="933"/>
    </location>
</feature>
<feature type="cross-link" description="Glycyl lysine isopeptide (Lys-Gly) (interchain with G-Cter in SUMO2)" evidence="2">
    <location>
        <position position="33"/>
    </location>
</feature>
<feature type="cross-link" description="Glycyl lysine isopeptide (Lys-Gly) (interchain with G-Cter in SUMO2)" evidence="2">
    <location>
        <position position="592"/>
    </location>
</feature>
<feature type="cross-link" description="Glycyl lysine isopeptide (Lys-Gly) (interchain with G-Cter in SUMO2)" evidence="2">
    <location>
        <position position="944"/>
    </location>
</feature>
<feature type="cross-link" description="Glycyl lysine isopeptide (Lys-Gly) (interchain with G-Cter in SUMO2)" evidence="2">
    <location>
        <position position="974"/>
    </location>
</feature>
<feature type="splice variant" id="VSP_024040" description="In isoform 2." evidence="8">
    <location>
        <begin position="1"/>
        <end position="959"/>
    </location>
</feature>
<feature type="splice variant" id="VSP_024041" description="In isoform 2." evidence="8">
    <original>SSATPRIVTENQTNKTVDSSINKKAADSTS</original>
    <variation>MRPFSPLPLLLPHISLVASAPLQNQTSFIF</variation>
    <location>
        <begin position="960"/>
        <end position="989"/>
    </location>
</feature>
<feature type="sequence conflict" description="In Ref. 2; BAE22064." evidence="9" ref="2">
    <original>S</original>
    <variation>Y</variation>
    <location>
        <position position="121"/>
    </location>
</feature>
<feature type="sequence conflict" description="In Ref. 1; CAB77024 and 3; AAH22714/AAH48827." evidence="9" ref="1 3">
    <original>G</original>
    <variation>A</variation>
    <location>
        <position position="128"/>
    </location>
</feature>
<feature type="sequence conflict" description="In Ref. 1; CAB77024 and 3; AAH22714/AAH48827." evidence="9" ref="1 3">
    <original>S</original>
    <variation>G</variation>
    <location>
        <position position="235"/>
    </location>
</feature>
<feature type="sequence conflict" description="In Ref. 3; AAH22714/AAH48827." evidence="9" ref="3">
    <original>D</original>
    <variation>E</variation>
    <location>
        <position position="287"/>
    </location>
</feature>
<feature type="sequence conflict" description="In Ref. 1; CAB77024 and 3; AAH22714/AAH48827." evidence="9" ref="1 3">
    <original>S</original>
    <variation>L</variation>
    <location>
        <position position="539"/>
    </location>
</feature>
<feature type="sequence conflict" description="In Ref. 2; BAE39609." evidence="9" ref="2">
    <original>S</original>
    <variation>P</variation>
    <location>
        <position position="545"/>
    </location>
</feature>
<feature type="sequence conflict" description="In Ref. 3; AAH22714/AAH48827." evidence="9" ref="3">
    <original>A</original>
    <variation>V</variation>
    <location>
        <position position="547"/>
    </location>
</feature>
<feature type="sequence conflict" description="In Ref. 1; CAB77024 and 3; AAH22714/AAH48827." evidence="9" ref="1 3">
    <original>S</original>
    <variation>T</variation>
    <location>
        <position position="551"/>
    </location>
</feature>
<feature type="sequence conflict" description="In Ref. 1; CAB77024." evidence="9" ref="1">
    <original>DG</original>
    <variation>GS</variation>
    <location>
        <begin position="564"/>
        <end position="565"/>
    </location>
</feature>
<feature type="sequence conflict" description="In Ref. 1; CAB77024." evidence="9" ref="1">
    <original>ESK</original>
    <variation>QST</variation>
    <location>
        <begin position="600"/>
        <end position="602"/>
    </location>
</feature>
<feature type="sequence conflict" description="In Ref. 1; CAB77024." evidence="9" ref="1">
    <original>K</original>
    <variation>G</variation>
    <location>
        <position position="622"/>
    </location>
</feature>
<feature type="sequence conflict" description="In Ref. 1; CAB77024." evidence="9" ref="1">
    <original>K</original>
    <variation>E</variation>
    <location>
        <position position="631"/>
    </location>
</feature>
<feature type="sequence conflict" description="In Ref. 1; CAB77024." evidence="9" ref="1">
    <original>Q</original>
    <variation>R</variation>
    <location>
        <position position="634"/>
    </location>
</feature>
<feature type="sequence conflict" description="In Ref. 2; BAE39609." evidence="9" ref="2">
    <original>P</original>
    <variation>T</variation>
    <location>
        <position position="964"/>
    </location>
</feature>
<feature type="sequence conflict" description="In Ref. 1; CAB77024." evidence="9" ref="1">
    <original>T</original>
    <variation>A</variation>
    <location>
        <position position="968"/>
    </location>
</feature>
<feature type="sequence conflict" description="In Ref. 2; BAE39609." evidence="9" ref="2">
    <original>H</original>
    <variation>Q</variation>
    <location>
        <position position="1201"/>
    </location>
</feature>
<comment type="function">
    <text evidence="2 6 7">Recruiter that couples transcriptional factors to general transcription apparatus and thereby modulates transcription regulation and chromatin formation. Can both act as an activator or a repressor depending on the context (PubMed:10777215). Required for HUSH-mediated heterochromatin formation and gene silencing (By similarity). Mediates MBD1-dependent transcriptional repression, probably by recruiting complexes containing SETDB1. Stabilizes SETDB1, is required to stimulate histone methyltransferase activity of SETDB1 and facilitates the conversion of dimethylated to trimethylated H3 'Lys-9' (H3K9me3). The complex formed with MBD1 and SETDB1 represses transcription and couples DNA methylation and histone H3 'Lys-9' trimethylation (H3K9me3) (PubMed:14536086). Facilitates telomerase TERT and TERC gene expression by SP1 in cancer cells (By similarity).</text>
</comment>
<comment type="subunit">
    <text evidence="2 7">Interacts with MBD1; the interaction is enhanced when MBD1 is sumoylated (By similarity). Interacts with SETDB1; the interaction protects SETDB1 from proteasomal degradation and is required to stimulate histone methyltransferase activity and facilitate the conversion of dimethylated to trimethylated H3 'Lys-9' (PubMed:14536086). Interacts with SUMO ubiquitin-like proteins (SUMO1, SUNO2 and SUMO3), with a preference for SUMO2 and SUMO3. Interacts with SP1, ATF7 and ZHX1. Interacts with the general transcription machinery, including ERCC2, ERCC3, GTF2E1, GTF2E2 and POLR2A (By similarity).</text>
</comment>
<comment type="subcellular location">
    <subcellularLocation>
        <location evidence="6">Nucleus</location>
    </subcellularLocation>
</comment>
<comment type="alternative products">
    <event type="alternative splicing"/>
    <isoform>
        <id>Q7TT18-1</id>
        <name>1</name>
        <sequence type="displayed"/>
    </isoform>
    <isoform>
        <id>Q7TT18-2</id>
        <name>2</name>
        <sequence type="described" ref="VSP_024040 VSP_024041"/>
    </isoform>
</comment>
<comment type="tissue specificity">
    <text evidence="6">Ubiquitously expressed at all stages studied.</text>
</comment>
<comment type="similarity">
    <text evidence="9">Belongs to the MCAF family.</text>
</comment>
<comment type="sequence caution" evidence="9">
    <conflict type="frameshift">
        <sequence resource="EMBL-CDS" id="BAE39609"/>
    </conflict>
</comment>
<keyword id="KW-0007">Acetylation</keyword>
<keyword id="KW-0010">Activator</keyword>
<keyword id="KW-0025">Alternative splicing</keyword>
<keyword id="KW-0175">Coiled coil</keyword>
<keyword id="KW-1017">Isopeptide bond</keyword>
<keyword id="KW-0539">Nucleus</keyword>
<keyword id="KW-0597">Phosphoprotein</keyword>
<keyword id="KW-1185">Reference proteome</keyword>
<keyword id="KW-0677">Repeat</keyword>
<keyword id="KW-0678">Repressor</keyword>
<keyword id="KW-0804">Transcription</keyword>
<keyword id="KW-0805">Transcription regulation</keyword>
<keyword id="KW-0832">Ubl conjugation</keyword>
<gene>
    <name type="primary">Atf7ip</name>
    <name type="synonym">Mcaf1</name>
</gene>
<proteinExistence type="evidence at protein level"/>
<sequence>MDSVEEPQKKVFKARKTMRASDRQQLDAVHRVKGELLRADGKLLNGSHENGDLDPTSPLENTDCIQDREEVNGIDGICFQSEESTTEWKETPCMPNVAVKNKQEDLNSEALSPSITCDLSSRVTTEPGSGSPASDNPGCGTPVSDNPASDNPASDNPASDNPDSGDLAAGELATTVQATGDSACEEPPSSDPSSSDPTSSEPSSSEPTCSEPISGDPVSEEAASHDLVSGDSTCSEPVSGEPVSHEAASSEPATSEPASDEPVARVVAACELAPGESALDDCAPSGDSQSDEPPSSEDSLPRSVCSGLASGELTPGELSVEPATDTVKPSSSAVCEAGPDPDKTEPSSNNSDDCPGKSEDDEHLDQIQSKDSCDEGNKVNSNVVEKEEPLETHSAIICSDLPPENTTKIAEDPIAEPALEEEAISSSMEVDQSEKDEHKSPAEPVAAVSEDPAEEDKEDTVVDNTDSMETDEIIPILEKLAPTEDELSCFSKASLLPVETSQDLEDKMEGSFGSPSKQESSENLPKEAFLVLSDEEDLSCGKDESEAVAQSKMSTPEGEKSEKDGKAEEEERVPAEEQPPVRNEFSRRKRSKSEDMDSVESKRRRYMDEEYEAEFQVKITAKGDINQKLQKVIQWLLQEKLCALQCAVFDKTLAELKTRVEKIECNKRHKAVLTELQAKIARLTKRFGAAKDDLKKRQESPPNPPISPGKPANDTNSNNNMTYRNAGTVRQLLESKRNVSEGPPPSFQTPVNTVSSASHATSTAVVSSQPKLQTSATSGSLPAAPLLPAPSTATVVATTQVPSGTPQPTISLQPLPVILHVPVAVTSQPQLLQSHPGTLVTNQPSGNVEFISVQSQPTVSGLTKNPVSLPPLPNPTKPNIPSVPSPSSIQRNSSTTAAPLGTTLAVQAVPTAHSIVQATRTSLPTVGPSGLYSSSSSRGPIQMKIPISTFSPPSSAEQNSSATPRIVTENQTNKTVDSSINKKAADSTSQSGKASSSDSSGVIDLTMDDEESGTTQDPKKISPPSSSTVSTSQPMSRPLQPILPAPPLQPSGVPTSGPSQATIHVLPTAPTTVNVTHRPVTQVTTRLPVPRAPANHQVVYTTLPAPTTQAPLRGTVMQAPAVRQVNPQNSVTVRVPQTTTYVVNNGLTLGSAGPQLTVHHRPPQVHNEPPRPLHPAPLPEAPQPQRLPPEAASTSLPQKPHLKLARVQSQNGIVLSWSVLEVDRSCATVDSYHLYAYHEEPSATVPSQWKKIGEVKALPLPMACTLTQFVSGSKYYFAVRAKDIYGRFGPFCDPQSTDVISSSQNS</sequence>
<accession>Q7TT18</accession>
<accession>Q3TJ86</accession>
<accession>Q3TZW1</accession>
<accession>Q3UVK5</accession>
<accession>Q3UYZ7</accession>
<accession>Q80ZK7</accession>
<accession>Q8C4A1</accession>
<accession>Q9JK31</accession>
<reference key="1">
    <citation type="journal article" date="2000" name="Oncogene">
        <title>A murine ATFa-associated factor with transcriptional repressing activity.</title>
        <authorList>
            <person name="De Graeve F."/>
            <person name="Bahr A."/>
            <person name="Chatton B."/>
            <person name="Kedinger C."/>
        </authorList>
    </citation>
    <scope>NUCLEOTIDE SEQUENCE [MRNA] (ISOFORM 1)</scope>
    <scope>FUNCTION</scope>
    <scope>NUCLEAR LOCALIZATION SIGNAL</scope>
    <scope>SUBCELLULAR LOCATION</scope>
    <scope>TISSUE SPECIFICITY</scope>
</reference>
<reference key="2">
    <citation type="journal article" date="2005" name="Science">
        <title>The transcriptional landscape of the mammalian genome.</title>
        <authorList>
            <person name="Carninci P."/>
            <person name="Kasukawa T."/>
            <person name="Katayama S."/>
            <person name="Gough J."/>
            <person name="Frith M.C."/>
            <person name="Maeda N."/>
            <person name="Oyama R."/>
            <person name="Ravasi T."/>
            <person name="Lenhard B."/>
            <person name="Wells C."/>
            <person name="Kodzius R."/>
            <person name="Shimokawa K."/>
            <person name="Bajic V.B."/>
            <person name="Brenner S.E."/>
            <person name="Batalov S."/>
            <person name="Forrest A.R."/>
            <person name="Zavolan M."/>
            <person name="Davis M.J."/>
            <person name="Wilming L.G."/>
            <person name="Aidinis V."/>
            <person name="Allen J.E."/>
            <person name="Ambesi-Impiombato A."/>
            <person name="Apweiler R."/>
            <person name="Aturaliya R.N."/>
            <person name="Bailey T.L."/>
            <person name="Bansal M."/>
            <person name="Baxter L."/>
            <person name="Beisel K.W."/>
            <person name="Bersano T."/>
            <person name="Bono H."/>
            <person name="Chalk A.M."/>
            <person name="Chiu K.P."/>
            <person name="Choudhary V."/>
            <person name="Christoffels A."/>
            <person name="Clutterbuck D.R."/>
            <person name="Crowe M.L."/>
            <person name="Dalla E."/>
            <person name="Dalrymple B.P."/>
            <person name="de Bono B."/>
            <person name="Della Gatta G."/>
            <person name="di Bernardo D."/>
            <person name="Down T."/>
            <person name="Engstrom P."/>
            <person name="Fagiolini M."/>
            <person name="Faulkner G."/>
            <person name="Fletcher C.F."/>
            <person name="Fukushima T."/>
            <person name="Furuno M."/>
            <person name="Futaki S."/>
            <person name="Gariboldi M."/>
            <person name="Georgii-Hemming P."/>
            <person name="Gingeras T.R."/>
            <person name="Gojobori T."/>
            <person name="Green R.E."/>
            <person name="Gustincich S."/>
            <person name="Harbers M."/>
            <person name="Hayashi Y."/>
            <person name="Hensch T.K."/>
            <person name="Hirokawa N."/>
            <person name="Hill D."/>
            <person name="Huminiecki L."/>
            <person name="Iacono M."/>
            <person name="Ikeo K."/>
            <person name="Iwama A."/>
            <person name="Ishikawa T."/>
            <person name="Jakt M."/>
            <person name="Kanapin A."/>
            <person name="Katoh M."/>
            <person name="Kawasawa Y."/>
            <person name="Kelso J."/>
            <person name="Kitamura H."/>
            <person name="Kitano H."/>
            <person name="Kollias G."/>
            <person name="Krishnan S.P."/>
            <person name="Kruger A."/>
            <person name="Kummerfeld S.K."/>
            <person name="Kurochkin I.V."/>
            <person name="Lareau L.F."/>
            <person name="Lazarevic D."/>
            <person name="Lipovich L."/>
            <person name="Liu J."/>
            <person name="Liuni S."/>
            <person name="McWilliam S."/>
            <person name="Madan Babu M."/>
            <person name="Madera M."/>
            <person name="Marchionni L."/>
            <person name="Matsuda H."/>
            <person name="Matsuzawa S."/>
            <person name="Miki H."/>
            <person name="Mignone F."/>
            <person name="Miyake S."/>
            <person name="Morris K."/>
            <person name="Mottagui-Tabar S."/>
            <person name="Mulder N."/>
            <person name="Nakano N."/>
            <person name="Nakauchi H."/>
            <person name="Ng P."/>
            <person name="Nilsson R."/>
            <person name="Nishiguchi S."/>
            <person name="Nishikawa S."/>
            <person name="Nori F."/>
            <person name="Ohara O."/>
            <person name="Okazaki Y."/>
            <person name="Orlando V."/>
            <person name="Pang K.C."/>
            <person name="Pavan W.J."/>
            <person name="Pavesi G."/>
            <person name="Pesole G."/>
            <person name="Petrovsky N."/>
            <person name="Piazza S."/>
            <person name="Reed J."/>
            <person name="Reid J.F."/>
            <person name="Ring B.Z."/>
            <person name="Ringwald M."/>
            <person name="Rost B."/>
            <person name="Ruan Y."/>
            <person name="Salzberg S.L."/>
            <person name="Sandelin A."/>
            <person name="Schneider C."/>
            <person name="Schoenbach C."/>
            <person name="Sekiguchi K."/>
            <person name="Semple C.A."/>
            <person name="Seno S."/>
            <person name="Sessa L."/>
            <person name="Sheng Y."/>
            <person name="Shibata Y."/>
            <person name="Shimada H."/>
            <person name="Shimada K."/>
            <person name="Silva D."/>
            <person name="Sinclair B."/>
            <person name="Sperling S."/>
            <person name="Stupka E."/>
            <person name="Sugiura K."/>
            <person name="Sultana R."/>
            <person name="Takenaka Y."/>
            <person name="Taki K."/>
            <person name="Tammoja K."/>
            <person name="Tan S.L."/>
            <person name="Tang S."/>
            <person name="Taylor M.S."/>
            <person name="Tegner J."/>
            <person name="Teichmann S.A."/>
            <person name="Ueda H.R."/>
            <person name="van Nimwegen E."/>
            <person name="Verardo R."/>
            <person name="Wei C.L."/>
            <person name="Yagi K."/>
            <person name="Yamanishi H."/>
            <person name="Zabarovsky E."/>
            <person name="Zhu S."/>
            <person name="Zimmer A."/>
            <person name="Hide W."/>
            <person name="Bult C."/>
            <person name="Grimmond S.M."/>
            <person name="Teasdale R.D."/>
            <person name="Liu E.T."/>
            <person name="Brusic V."/>
            <person name="Quackenbush J."/>
            <person name="Wahlestedt C."/>
            <person name="Mattick J.S."/>
            <person name="Hume D.A."/>
            <person name="Kai C."/>
            <person name="Sasaki D."/>
            <person name="Tomaru Y."/>
            <person name="Fukuda S."/>
            <person name="Kanamori-Katayama M."/>
            <person name="Suzuki M."/>
            <person name="Aoki J."/>
            <person name="Arakawa T."/>
            <person name="Iida J."/>
            <person name="Imamura K."/>
            <person name="Itoh M."/>
            <person name="Kato T."/>
            <person name="Kawaji H."/>
            <person name="Kawagashira N."/>
            <person name="Kawashima T."/>
            <person name="Kojima M."/>
            <person name="Kondo S."/>
            <person name="Konno H."/>
            <person name="Nakano K."/>
            <person name="Ninomiya N."/>
            <person name="Nishio T."/>
            <person name="Okada M."/>
            <person name="Plessy C."/>
            <person name="Shibata K."/>
            <person name="Shiraki T."/>
            <person name="Suzuki S."/>
            <person name="Tagami M."/>
            <person name="Waki K."/>
            <person name="Watahiki A."/>
            <person name="Okamura-Oho Y."/>
            <person name="Suzuki H."/>
            <person name="Kawai J."/>
            <person name="Hayashizaki Y."/>
        </authorList>
    </citation>
    <scope>NUCLEOTIDE SEQUENCE [LARGE SCALE MRNA] (ISOFORMS 1 AND 2)</scope>
    <source>
        <strain>C57BL/6J</strain>
        <strain>NOD</strain>
        <tissue>Cerebellum</tissue>
        <tissue>Forelimb</tissue>
        <tissue>Spleen</tissue>
        <tissue>Urinary bladder</tissue>
    </source>
</reference>
<reference key="3">
    <citation type="journal article" date="2004" name="Genome Res.">
        <title>The status, quality, and expansion of the NIH full-length cDNA project: the Mammalian Gene Collection (MGC).</title>
        <authorList>
            <consortium name="The MGC Project Team"/>
        </authorList>
    </citation>
    <scope>NUCLEOTIDE SEQUENCE [LARGE SCALE MRNA] (ISOFORM 1)</scope>
    <source>
        <strain>C57BL/6J</strain>
        <strain>FVB/N</strain>
        <tissue>Brain</tissue>
        <tissue>Liver</tissue>
        <tissue>Mammary tumor</tissue>
    </source>
</reference>
<reference key="4">
    <citation type="journal article" date="2003" name="Mol. Cell">
        <title>mAM facilitates conversion by ESET of dimethyl to trimethyl lysine 9 of histone H3 to cause transcriptional repression.</title>
        <authorList>
            <person name="Wang H."/>
            <person name="An W."/>
            <person name="Cao R."/>
            <person name="Xia L."/>
            <person name="Erdjument-Bromage H."/>
            <person name="Chatton B."/>
            <person name="Tempst P."/>
            <person name="Roeder R.G."/>
            <person name="Zhang Y."/>
        </authorList>
    </citation>
    <scope>FUNCTION</scope>
    <scope>INTERACTION WITH SETDB1</scope>
</reference>
<reference key="5">
    <citation type="journal article" date="2007" name="Proc. Natl. Acad. Sci. U.S.A.">
        <title>Large-scale phosphorylation analysis of mouse liver.</title>
        <authorList>
            <person name="Villen J."/>
            <person name="Beausoleil S.A."/>
            <person name="Gerber S.A."/>
            <person name="Gygi S.P."/>
        </authorList>
    </citation>
    <scope>PHOSPHORYLATION [LARGE SCALE ANALYSIS] AT SER-57</scope>
    <scope>IDENTIFICATION BY MASS SPECTROMETRY [LARGE SCALE ANALYSIS]</scope>
    <source>
        <tissue>Liver</tissue>
    </source>
</reference>
<reference key="6">
    <citation type="journal article" date="2010" name="Cell">
        <title>A tissue-specific atlas of mouse protein phosphorylation and expression.</title>
        <authorList>
            <person name="Huttlin E.L."/>
            <person name="Jedrychowski M.P."/>
            <person name="Elias J.E."/>
            <person name="Goswami T."/>
            <person name="Rad R."/>
            <person name="Beausoleil S.A."/>
            <person name="Villen J."/>
            <person name="Haas W."/>
            <person name="Sowa M.E."/>
            <person name="Gygi S.P."/>
        </authorList>
    </citation>
    <scope>PHOSPHORYLATION [LARGE SCALE ANALYSIS] AT SER-112; SER-514; SER-516; SER-593 AND SER-700</scope>
    <scope>IDENTIFICATION BY MASS SPECTROMETRY [LARGE SCALE ANALYSIS]</scope>
    <source>
        <tissue>Brain</tissue>
        <tissue>Brown adipose tissue</tissue>
        <tissue>Heart</tissue>
        <tissue>Kidney</tissue>
        <tissue>Liver</tissue>
        <tissue>Lung</tissue>
        <tissue>Pancreas</tissue>
        <tissue>Spleen</tissue>
        <tissue>Testis</tissue>
    </source>
</reference>
<dbReference type="EMBL" id="AJ132702">
    <property type="protein sequence ID" value="CAB77024.1"/>
    <property type="molecule type" value="mRNA"/>
</dbReference>
<dbReference type="EMBL" id="BC022714">
    <property type="protein sequence ID" value="AAH22714.1"/>
    <property type="status" value="ALT_TERM"/>
    <property type="molecule type" value="mRNA"/>
</dbReference>
<dbReference type="EMBL" id="AK082697">
    <property type="protein sequence ID" value="BAC38574.1"/>
    <property type="molecule type" value="mRNA"/>
</dbReference>
<dbReference type="EMBL" id="AK134252">
    <property type="protein sequence ID" value="BAE22064.1"/>
    <property type="molecule type" value="mRNA"/>
</dbReference>
<dbReference type="EMBL" id="AK137199">
    <property type="protein sequence ID" value="BAE23264.1"/>
    <property type="molecule type" value="mRNA"/>
</dbReference>
<dbReference type="EMBL" id="AK157479">
    <property type="protein sequence ID" value="BAE34096.1"/>
    <property type="molecule type" value="mRNA"/>
</dbReference>
<dbReference type="EMBL" id="AK167542">
    <property type="protein sequence ID" value="BAE39609.1"/>
    <property type="status" value="ALT_FRAME"/>
    <property type="molecule type" value="mRNA"/>
</dbReference>
<dbReference type="EMBL" id="BC048827">
    <property type="protein sequence ID" value="AAH48827.1"/>
    <property type="status" value="ALT_TERM"/>
    <property type="molecule type" value="mRNA"/>
</dbReference>
<dbReference type="EMBL" id="BC052460">
    <property type="protein sequence ID" value="AAH52460.1"/>
    <property type="molecule type" value="mRNA"/>
</dbReference>
<dbReference type="EMBL" id="BC060246">
    <property type="protein sequence ID" value="AAH60246.1"/>
    <property type="molecule type" value="mRNA"/>
</dbReference>
<dbReference type="CCDS" id="CCDS20651.1">
    <molecule id="Q7TT18-1"/>
</dbReference>
<dbReference type="RefSeq" id="NP_062299.2">
    <molecule id="Q7TT18-1"/>
    <property type="nucleotide sequence ID" value="NM_019426.2"/>
</dbReference>
<dbReference type="RefSeq" id="XP_006506452.2">
    <molecule id="Q7TT18-1"/>
    <property type="nucleotide sequence ID" value="XM_006506389.5"/>
</dbReference>
<dbReference type="RefSeq" id="XP_017177170.1">
    <molecule id="Q7TT18-1"/>
    <property type="nucleotide sequence ID" value="XM_017321681.3"/>
</dbReference>
<dbReference type="RefSeq" id="XP_030111363.1">
    <molecule id="Q7TT18-1"/>
    <property type="nucleotide sequence ID" value="XM_030255503.2"/>
</dbReference>
<dbReference type="RefSeq" id="XP_036022189.1">
    <molecule id="Q7TT18-1"/>
    <property type="nucleotide sequence ID" value="XM_036166296.1"/>
</dbReference>
<dbReference type="SMR" id="Q7TT18"/>
<dbReference type="BioGRID" id="207616">
    <property type="interactions" value="15"/>
</dbReference>
<dbReference type="FunCoup" id="Q7TT18">
    <property type="interactions" value="4372"/>
</dbReference>
<dbReference type="IntAct" id="Q7TT18">
    <property type="interactions" value="3"/>
</dbReference>
<dbReference type="STRING" id="10090.ENSMUSP00000032335"/>
<dbReference type="GlyGen" id="Q7TT18">
    <property type="glycosylation" value="21 sites, 1 N-linked glycan (1 site), 1 O-linked glycan (20 sites)"/>
</dbReference>
<dbReference type="iPTMnet" id="Q7TT18"/>
<dbReference type="PhosphoSitePlus" id="Q7TT18"/>
<dbReference type="jPOST" id="Q7TT18"/>
<dbReference type="PaxDb" id="10090-ENSMUSP00000032335"/>
<dbReference type="PeptideAtlas" id="Q7TT18"/>
<dbReference type="ProteomicsDB" id="295837">
    <molecule id="Q7TT18-1"/>
</dbReference>
<dbReference type="ProteomicsDB" id="295838">
    <molecule id="Q7TT18-2"/>
</dbReference>
<dbReference type="Pumba" id="Q7TT18"/>
<dbReference type="Antibodypedia" id="12020">
    <property type="antibodies" value="91 antibodies from 20 providers"/>
</dbReference>
<dbReference type="DNASU" id="54343"/>
<dbReference type="Ensembl" id="ENSMUST00000032335.13">
    <molecule id="Q7TT18-1"/>
    <property type="protein sequence ID" value="ENSMUSP00000032335.7"/>
    <property type="gene ID" value="ENSMUSG00000030213.13"/>
</dbReference>
<dbReference type="GeneID" id="54343"/>
<dbReference type="KEGG" id="mmu:54343"/>
<dbReference type="UCSC" id="uc009elv.1">
    <molecule id="Q7TT18-1"/>
    <property type="organism name" value="mouse"/>
</dbReference>
<dbReference type="UCSC" id="uc009elx.1">
    <molecule id="Q7TT18-2"/>
    <property type="organism name" value="mouse"/>
</dbReference>
<dbReference type="AGR" id="MGI:1858965"/>
<dbReference type="CTD" id="55729"/>
<dbReference type="MGI" id="MGI:1858965">
    <property type="gene designation" value="Atf7ip"/>
</dbReference>
<dbReference type="VEuPathDB" id="HostDB:ENSMUSG00000030213"/>
<dbReference type="eggNOG" id="ENOG502QSM2">
    <property type="taxonomic scope" value="Eukaryota"/>
</dbReference>
<dbReference type="GeneTree" id="ENSGT00530000063707"/>
<dbReference type="HOGENOM" id="CLU_009529_0_0_1"/>
<dbReference type="InParanoid" id="Q7TT18"/>
<dbReference type="OMA" id="YQETIHE"/>
<dbReference type="OrthoDB" id="2434995at2759"/>
<dbReference type="PhylomeDB" id="Q7TT18"/>
<dbReference type="TreeFam" id="TF329427"/>
<dbReference type="Reactome" id="R-MMU-3214841">
    <property type="pathway name" value="PKMTs methylate histone lysines"/>
</dbReference>
<dbReference type="Reactome" id="R-MMU-9843940">
    <property type="pathway name" value="Regulation of endogenous retroelements by KRAB-ZFP proteins"/>
</dbReference>
<dbReference type="BioGRID-ORCS" id="54343">
    <property type="hits" value="16 hits in 86 CRISPR screens"/>
</dbReference>
<dbReference type="ChiTaRS" id="Atf7ip">
    <property type="organism name" value="mouse"/>
</dbReference>
<dbReference type="PRO" id="PR:Q7TT18"/>
<dbReference type="Proteomes" id="UP000000589">
    <property type="component" value="Chromosome 6"/>
</dbReference>
<dbReference type="RNAct" id="Q7TT18">
    <property type="molecule type" value="protein"/>
</dbReference>
<dbReference type="Bgee" id="ENSMUSG00000030213">
    <property type="expression patterns" value="Expressed in animal zygote and 263 other cell types or tissues"/>
</dbReference>
<dbReference type="ExpressionAtlas" id="Q7TT18">
    <property type="expression patterns" value="baseline and differential"/>
</dbReference>
<dbReference type="GO" id="GO:0005829">
    <property type="term" value="C:cytosol"/>
    <property type="evidence" value="ECO:0007669"/>
    <property type="project" value="Ensembl"/>
</dbReference>
<dbReference type="GO" id="GO:0016604">
    <property type="term" value="C:nuclear body"/>
    <property type="evidence" value="ECO:0007669"/>
    <property type="project" value="Ensembl"/>
</dbReference>
<dbReference type="GO" id="GO:0005654">
    <property type="term" value="C:nucleoplasm"/>
    <property type="evidence" value="ECO:0000304"/>
    <property type="project" value="Reactome"/>
</dbReference>
<dbReference type="GO" id="GO:0005634">
    <property type="term" value="C:nucleus"/>
    <property type="evidence" value="ECO:0000250"/>
    <property type="project" value="UniProtKB"/>
</dbReference>
<dbReference type="GO" id="GO:0005667">
    <property type="term" value="C:transcription regulator complex"/>
    <property type="evidence" value="ECO:0000314"/>
    <property type="project" value="MGI"/>
</dbReference>
<dbReference type="GO" id="GO:0016887">
    <property type="term" value="F:ATP hydrolysis activity"/>
    <property type="evidence" value="ECO:0000314"/>
    <property type="project" value="MGI"/>
</dbReference>
<dbReference type="GO" id="GO:0003714">
    <property type="term" value="F:transcription corepressor activity"/>
    <property type="evidence" value="ECO:0000314"/>
    <property type="project" value="MGI"/>
</dbReference>
<dbReference type="GO" id="GO:0006346">
    <property type="term" value="P:DNA methylation-dependent constitutive heterochromatin formation"/>
    <property type="evidence" value="ECO:0000250"/>
    <property type="project" value="UniProtKB"/>
</dbReference>
<dbReference type="GO" id="GO:0045892">
    <property type="term" value="P:negative regulation of DNA-templated transcription"/>
    <property type="evidence" value="ECO:0000250"/>
    <property type="project" value="UniProtKB"/>
</dbReference>
<dbReference type="GO" id="GO:0000122">
    <property type="term" value="P:negative regulation of transcription by RNA polymerase II"/>
    <property type="evidence" value="ECO:0000314"/>
    <property type="project" value="MGI"/>
</dbReference>
<dbReference type="GO" id="GO:0045893">
    <property type="term" value="P:positive regulation of DNA-templated transcription"/>
    <property type="evidence" value="ECO:0000250"/>
    <property type="project" value="UniProtKB"/>
</dbReference>
<dbReference type="Gene3D" id="2.60.40.10">
    <property type="entry name" value="Immunoglobulins"/>
    <property type="match status" value="1"/>
</dbReference>
<dbReference type="InterPro" id="IPR026085">
    <property type="entry name" value="ATF7-int"/>
</dbReference>
<dbReference type="InterPro" id="IPR031870">
    <property type="entry name" value="ATF7IP_BD"/>
</dbReference>
<dbReference type="InterPro" id="IPR056565">
    <property type="entry name" value="Fn3_ATF7IP"/>
</dbReference>
<dbReference type="InterPro" id="IPR003961">
    <property type="entry name" value="FN3_dom"/>
</dbReference>
<dbReference type="InterPro" id="IPR036116">
    <property type="entry name" value="FN3_sf"/>
</dbReference>
<dbReference type="InterPro" id="IPR013783">
    <property type="entry name" value="Ig-like_fold"/>
</dbReference>
<dbReference type="PANTHER" id="PTHR23210">
    <property type="entry name" value="ACTIVATING TRANSCRIPTION FACTOR 7 INTERACTING PROTEIN"/>
    <property type="match status" value="1"/>
</dbReference>
<dbReference type="PANTHER" id="PTHR23210:SF22">
    <property type="entry name" value="ACTIVATING TRANSCRIPTION FACTOR 7-INTERACTING PROTEIN 1"/>
    <property type="match status" value="1"/>
</dbReference>
<dbReference type="Pfam" id="PF16788">
    <property type="entry name" value="ATF7IP_BD"/>
    <property type="match status" value="1"/>
</dbReference>
<dbReference type="Pfam" id="PF16794">
    <property type="entry name" value="fn3_4"/>
    <property type="match status" value="1"/>
</dbReference>
<dbReference type="SUPFAM" id="SSF49265">
    <property type="entry name" value="Fibronectin type III"/>
    <property type="match status" value="1"/>
</dbReference>
<dbReference type="PROSITE" id="PS50853">
    <property type="entry name" value="FN3"/>
    <property type="match status" value="1"/>
</dbReference>
<name>MCAF1_MOUSE</name>
<protein>
    <recommendedName>
        <fullName>Activating transcription factor 7-interacting protein 1</fullName>
    </recommendedName>
    <alternativeName>
        <fullName>ATFa-associated modulator</fullName>
        <shortName>mAM</shortName>
    </alternativeName>
    <alternativeName>
        <fullName>MBD1-containing chromatin-associated factor 1</fullName>
    </alternativeName>
</protein>